<feature type="chain" id="PRO_0000312732" description="Sphingolipid delta(4)-desaturase DES1">
    <location>
        <begin position="1"/>
        <end position="323"/>
    </location>
</feature>
<feature type="transmembrane region" description="Helical" evidence="2">
    <location>
        <begin position="41"/>
        <end position="61"/>
    </location>
</feature>
<feature type="transmembrane region" description="Helical" evidence="2">
    <location>
        <begin position="68"/>
        <end position="88"/>
    </location>
</feature>
<feature type="transmembrane region" description="Helical" evidence="2">
    <location>
        <begin position="102"/>
        <end position="122"/>
    </location>
</feature>
<feature type="transmembrane region" description="Helical" evidence="2">
    <location>
        <begin position="159"/>
        <end position="179"/>
    </location>
</feature>
<feature type="transmembrane region" description="Helical" evidence="2">
    <location>
        <begin position="185"/>
        <end position="205"/>
    </location>
</feature>
<feature type="transmembrane region" description="Helical" evidence="2">
    <location>
        <begin position="209"/>
        <end position="229"/>
    </location>
</feature>
<feature type="short sequence motif" description="Histidine box-1" evidence="5">
    <location>
        <begin position="89"/>
        <end position="93"/>
    </location>
</feature>
<feature type="short sequence motif" description="Histidine box-2" evidence="5">
    <location>
        <begin position="128"/>
        <end position="132"/>
    </location>
</feature>
<feature type="short sequence motif" description="Histidine box-3" evidence="5">
    <location>
        <begin position="259"/>
        <end position="263"/>
    </location>
</feature>
<dbReference type="EC" id="1.14.19.17" evidence="1"/>
<dbReference type="EC" id="5.2.1.-" evidence="3"/>
<dbReference type="EMBL" id="AJ851729">
    <property type="protein sequence ID" value="CAH65363.1"/>
    <property type="molecule type" value="mRNA"/>
</dbReference>
<dbReference type="RefSeq" id="NP_001012583.1">
    <property type="nucleotide sequence ID" value="NM_001012565.2"/>
</dbReference>
<dbReference type="DIP" id="DIP-61751N"/>
<dbReference type="FunCoup" id="Q5F3C1">
    <property type="interactions" value="864"/>
</dbReference>
<dbReference type="IntAct" id="Q5F3C1">
    <property type="interactions" value="1"/>
</dbReference>
<dbReference type="STRING" id="9031.ENSGALP00000015178"/>
<dbReference type="SwissLipids" id="SLP:000001830"/>
<dbReference type="PaxDb" id="9031-ENSGALP00000015178"/>
<dbReference type="Ensembl" id="ENSGALT00010039936.1">
    <property type="protein sequence ID" value="ENSGALP00010023123.1"/>
    <property type="gene ID" value="ENSGALG00010016573.1"/>
</dbReference>
<dbReference type="GeneID" id="421327"/>
<dbReference type="KEGG" id="gga:421327"/>
<dbReference type="CTD" id="8560"/>
<dbReference type="VEuPathDB" id="HostDB:geneid_421327"/>
<dbReference type="eggNOG" id="KOG2987">
    <property type="taxonomic scope" value="Eukaryota"/>
</dbReference>
<dbReference type="GeneTree" id="ENSGT00390000013448"/>
<dbReference type="HOGENOM" id="CLU_032156_0_0_1"/>
<dbReference type="InParanoid" id="Q5F3C1"/>
<dbReference type="OMA" id="GATCNQN"/>
<dbReference type="OrthoDB" id="200948at2759"/>
<dbReference type="PhylomeDB" id="Q5F3C1"/>
<dbReference type="TreeFam" id="TF313582"/>
<dbReference type="Reactome" id="R-GGA-1660661">
    <property type="pathway name" value="Sphingolipid de novo biosynthesis"/>
</dbReference>
<dbReference type="Reactome" id="R-GGA-433584">
    <property type="pathway name" value="Sphingolipid metabolism"/>
</dbReference>
<dbReference type="Reactome" id="R-GGA-6798695">
    <property type="pathway name" value="Neutrophil degranulation"/>
</dbReference>
<dbReference type="PRO" id="PR:Q5F3C1"/>
<dbReference type="Proteomes" id="UP000000539">
    <property type="component" value="Chromosome 3"/>
</dbReference>
<dbReference type="Bgee" id="ENSGALG00000009330">
    <property type="expression patterns" value="Expressed in spermatocyte and 13 other cell types or tissues"/>
</dbReference>
<dbReference type="GO" id="GO:0005789">
    <property type="term" value="C:endoplasmic reticulum membrane"/>
    <property type="evidence" value="ECO:0007669"/>
    <property type="project" value="UniProtKB-SubCell"/>
</dbReference>
<dbReference type="GO" id="GO:0016859">
    <property type="term" value="F:cis-trans isomerase activity"/>
    <property type="evidence" value="ECO:0000314"/>
    <property type="project" value="UniProtKB"/>
</dbReference>
<dbReference type="GO" id="GO:0050251">
    <property type="term" value="F:retinol isomerase activity"/>
    <property type="evidence" value="ECO:0000314"/>
    <property type="project" value="UniProtKB"/>
</dbReference>
<dbReference type="GO" id="GO:0042284">
    <property type="term" value="F:sphingolipid delta-4 desaturase activity"/>
    <property type="evidence" value="ECO:0000318"/>
    <property type="project" value="GO_Central"/>
</dbReference>
<dbReference type="GO" id="GO:0046513">
    <property type="term" value="P:ceramide biosynthetic process"/>
    <property type="evidence" value="ECO:0000318"/>
    <property type="project" value="GO_Central"/>
</dbReference>
<dbReference type="GO" id="GO:0006633">
    <property type="term" value="P:fatty acid biosynthetic process"/>
    <property type="evidence" value="ECO:0007669"/>
    <property type="project" value="UniProtKB-KW"/>
</dbReference>
<dbReference type="GO" id="GO:0043217">
    <property type="term" value="P:myelin maintenance"/>
    <property type="evidence" value="ECO:0000250"/>
    <property type="project" value="UniProtKB"/>
</dbReference>
<dbReference type="CDD" id="cd03508">
    <property type="entry name" value="Delta4-sphingolipid-FADS-like"/>
    <property type="match status" value="1"/>
</dbReference>
<dbReference type="InterPro" id="IPR011388">
    <property type="entry name" value="DES1/DES2"/>
</dbReference>
<dbReference type="InterPro" id="IPR005804">
    <property type="entry name" value="FA_desaturase_dom"/>
</dbReference>
<dbReference type="InterPro" id="IPR013866">
    <property type="entry name" value="Sphingolipid_d4-desaturase_N"/>
</dbReference>
<dbReference type="PANTHER" id="PTHR12879">
    <property type="entry name" value="SPHINGOLIPID DELTA 4 DESATURASE/C-4 HYDROXYLASE PROTEIN DES2"/>
    <property type="match status" value="1"/>
</dbReference>
<dbReference type="PANTHER" id="PTHR12879:SF2">
    <property type="entry name" value="SPHINGOLIPID DELTA(4)-DESATURASE DES1"/>
    <property type="match status" value="1"/>
</dbReference>
<dbReference type="Pfam" id="PF00487">
    <property type="entry name" value="FA_desaturase"/>
    <property type="match status" value="1"/>
</dbReference>
<dbReference type="Pfam" id="PF08557">
    <property type="entry name" value="Lipid_DES"/>
    <property type="match status" value="1"/>
</dbReference>
<dbReference type="PIRSF" id="PIRSF017228">
    <property type="entry name" value="Sphnglp_dlt4_des"/>
    <property type="match status" value="1"/>
</dbReference>
<dbReference type="SMART" id="SM01269">
    <property type="entry name" value="Lipid_DES"/>
    <property type="match status" value="1"/>
</dbReference>
<name>DEGS1_CHICK</name>
<protein>
    <recommendedName>
        <fullName>Sphingolipid delta(4)-desaturase DES1</fullName>
        <ecNumber evidence="1">1.14.19.17</ecNumber>
    </recommendedName>
    <alternativeName>
        <fullName>Degenerative spermatocyte homolog 1</fullName>
    </alternativeName>
    <alternativeName>
        <fullName evidence="4">Dihydroceramide desaturase-1</fullName>
    </alternativeName>
    <alternativeName>
        <fullName>Retinol isomerase</fullName>
        <ecNumber evidence="3">5.2.1.-</ecNumber>
    </alternativeName>
</protein>
<evidence type="ECO:0000250" key="1">
    <source>
        <dbReference type="UniProtKB" id="O15121"/>
    </source>
</evidence>
<evidence type="ECO:0000255" key="2"/>
<evidence type="ECO:0000269" key="3">
    <source>
    </source>
</evidence>
<evidence type="ECO:0000303" key="4">
    <source>
    </source>
</evidence>
<evidence type="ECO:0000305" key="5"/>
<evidence type="ECO:0000305" key="6">
    <source>
    </source>
</evidence>
<proteinExistence type="evidence at protein level"/>
<keyword id="KW-0256">Endoplasmic reticulum</keyword>
<keyword id="KW-0275">Fatty acid biosynthesis</keyword>
<keyword id="KW-0276">Fatty acid metabolism</keyword>
<keyword id="KW-0413">Isomerase</keyword>
<keyword id="KW-0444">Lipid biosynthesis</keyword>
<keyword id="KW-0443">Lipid metabolism</keyword>
<keyword id="KW-0472">Membrane</keyword>
<keyword id="KW-0560">Oxidoreductase</keyword>
<keyword id="KW-1185">Reference proteome</keyword>
<keyword id="KW-0812">Transmembrane</keyword>
<keyword id="KW-1133">Transmembrane helix</keyword>
<sequence>MGNTVAREDFEWVYTDQPHADRRKEILAKHPEIKALMKPDYNLIWVVMLMVAAQLTAFYLVRDLDWKWVVFWAYVFGSCISHSMTLAIHEISHNSAFGNGRAMWNRWFGIFANLPLGLPYSISFKRYHMDHHRYLGGDGIDVDIPTNFEGWFFCTRFRKFIWIVLQPFFYAIRPLCINPKPITRLEIINLLAQLFFDIVIYYLWGAKSIFYMLAGSVLGLGLHPISGHFIAEHYMFLKGHETYSYYGPLNLLTFNVGYHNEHHDFPNIPGKSLPLVKKIAAEYYDNLPQYNSWIKVLYDFVMDDTISPYSRMKRQLKGEVKQD</sequence>
<accession>Q5F3C1</accession>
<comment type="function">
    <text evidence="1 3">Has sphingolipid-delta-4-desaturase activity. Converts D-erythro-sphinganine to D-erythro-sphingosine (E-sphing-4-enine) (By similarity). Catalyzes the equilibrium isomerization of retinols (PubMed:23143414).</text>
</comment>
<comment type="catalytic activity">
    <reaction evidence="1">
        <text>an N-acylsphinganine + 2 Fe(II)-[cytochrome b5] + O2 + 2 H(+) = an N-acylsphing-4-enine + 2 Fe(III)-[cytochrome b5] + 2 H2O</text>
        <dbReference type="Rhea" id="RHEA:46544"/>
        <dbReference type="Rhea" id="RHEA-COMP:10438"/>
        <dbReference type="Rhea" id="RHEA-COMP:10439"/>
        <dbReference type="ChEBI" id="CHEBI:15377"/>
        <dbReference type="ChEBI" id="CHEBI:15378"/>
        <dbReference type="ChEBI" id="CHEBI:15379"/>
        <dbReference type="ChEBI" id="CHEBI:29033"/>
        <dbReference type="ChEBI" id="CHEBI:29034"/>
        <dbReference type="ChEBI" id="CHEBI:31488"/>
        <dbReference type="ChEBI" id="CHEBI:52639"/>
        <dbReference type="EC" id="1.14.19.17"/>
    </reaction>
    <physiologicalReaction direction="left-to-right" evidence="1">
        <dbReference type="Rhea" id="RHEA:46545"/>
    </physiologicalReaction>
</comment>
<comment type="catalytic activity">
    <reaction evidence="3">
        <text>all-trans-retinol = 11-cis-retinol</text>
        <dbReference type="Rhea" id="RHEA:19141"/>
        <dbReference type="ChEBI" id="CHEBI:16302"/>
        <dbReference type="ChEBI" id="CHEBI:17336"/>
    </reaction>
    <physiologicalReaction direction="left-to-right" evidence="6">
        <dbReference type="Rhea" id="RHEA:19142"/>
    </physiologicalReaction>
    <physiologicalReaction direction="right-to-left" evidence="6">
        <dbReference type="Rhea" id="RHEA:19143"/>
    </physiologicalReaction>
</comment>
<comment type="catalytic activity">
    <reaction evidence="3">
        <text>all-trans-retinol = 9-cis-retinol</text>
        <dbReference type="Rhea" id="RHEA:55348"/>
        <dbReference type="ChEBI" id="CHEBI:17336"/>
        <dbReference type="ChEBI" id="CHEBI:78272"/>
    </reaction>
    <physiologicalReaction direction="left-to-right" evidence="6">
        <dbReference type="Rhea" id="RHEA:55349"/>
    </physiologicalReaction>
</comment>
<comment type="catalytic activity">
    <reaction evidence="3">
        <text>all-trans-retinol = 13-cis-retinol</text>
        <dbReference type="Rhea" id="RHEA:55352"/>
        <dbReference type="ChEBI" id="CHEBI:17336"/>
        <dbReference type="ChEBI" id="CHEBI:45479"/>
    </reaction>
    <physiologicalReaction direction="left-to-right" evidence="6">
        <dbReference type="Rhea" id="RHEA:55353"/>
    </physiologicalReaction>
</comment>
<comment type="catalytic activity">
    <reaction evidence="3">
        <text>11-cis-retinol = 13-cis-retinol</text>
        <dbReference type="Rhea" id="RHEA:55356"/>
        <dbReference type="ChEBI" id="CHEBI:16302"/>
        <dbReference type="ChEBI" id="CHEBI:45479"/>
    </reaction>
    <physiologicalReaction direction="left-to-right" evidence="6">
        <dbReference type="Rhea" id="RHEA:55357"/>
    </physiologicalReaction>
</comment>
<comment type="catalytic activity">
    <reaction evidence="3">
        <text>11-cis-retinol = 9-cis-retinol</text>
        <dbReference type="Rhea" id="RHEA:55360"/>
        <dbReference type="ChEBI" id="CHEBI:16302"/>
        <dbReference type="ChEBI" id="CHEBI:78272"/>
    </reaction>
    <physiologicalReaction direction="left-to-right" evidence="6">
        <dbReference type="Rhea" id="RHEA:55361"/>
    </physiologicalReaction>
</comment>
<comment type="biophysicochemical properties">
    <kinetics>
        <KM evidence="3">4.3 uM for all-trans-retinol</KM>
        <KM evidence="3">14.8 uM for 11-cis-retinol</KM>
        <Vmax evidence="3">4.3 pmol/min/mg enzyme toward all-trans-retinol for the formation of 11-cis-retinol</Vmax>
        <Vmax evidence="3">65.0 pmol/min/mg enzyme toward all-trans-retinol for the formation of 9-cis-retinol</Vmax>
        <Vmax evidence="3">1730.0 pmol/min/mg enzyme toward all-trans-retinol for the formation of 13-cis-retinol</Vmax>
        <Vmax evidence="3">129.0 pmol/min/mg enzyme toward 11-cis-retinol for the formation of 9-cis-retinol</Vmax>
        <Vmax evidence="3">768.0 pmol/min/mg enzyme toward 11-cis-retinol for the formation of 13-cis-retinol</Vmax>
        <Vmax evidence="3">1970.0 pmol/min/mg enzyme toward 11-cis-retinol for the formation of all-trans-retinol</Vmax>
    </kinetics>
</comment>
<comment type="subunit">
    <text evidence="3">Interacts with RLBP1; the interaction increases synthesis of chromophore-precursors by DEGS1.</text>
</comment>
<comment type="subcellular location">
    <subcellularLocation>
        <location evidence="1">Endoplasmic reticulum membrane</location>
        <topology evidence="1">Multi-pass membrane protein</topology>
    </subcellularLocation>
</comment>
<comment type="tissue specificity">
    <text evidence="3">Expressed in retina and retinal pigment epithelium by Mueller cells (at protein level).</text>
</comment>
<comment type="similarity">
    <text evidence="5">Belongs to the fatty acid desaturase type 1 family. DEGS subfamily.</text>
</comment>
<reference key="1">
    <citation type="journal article" date="2005" name="Genome Biol.">
        <title>Full-length cDNAs from chicken bursal lymphocytes to facilitate gene function analysis.</title>
        <authorList>
            <person name="Caldwell R.B."/>
            <person name="Kierzek A.M."/>
            <person name="Arakawa H."/>
            <person name="Bezzubov Y."/>
            <person name="Zaim J."/>
            <person name="Fiedler P."/>
            <person name="Kutter S."/>
            <person name="Blagodatski A."/>
            <person name="Kostovska D."/>
            <person name="Koter M."/>
            <person name="Plachy J."/>
            <person name="Carninci P."/>
            <person name="Hayashizaki Y."/>
            <person name="Buerstedde J.-M."/>
        </authorList>
    </citation>
    <scope>NUCLEOTIDE SEQUENCE [LARGE SCALE MRNA]</scope>
    <source>
        <strain>CB</strain>
        <tissue>Bursa of Fabricius</tissue>
    </source>
</reference>
<reference key="2">
    <citation type="journal article" date="2013" name="Nat. Chem. Biol.">
        <title>Identification of DES1 as a vitamin A isomerase in Mueller glial cells of the retina.</title>
        <authorList>
            <person name="Kaylor J.J."/>
            <person name="Yuan Q."/>
            <person name="Cook J."/>
            <person name="Sarfare S."/>
            <person name="Makshanoff J."/>
            <person name="Miu A."/>
            <person name="Kim A."/>
            <person name="Kim P."/>
            <person name="Habib S."/>
            <person name="Roybal C.N."/>
            <person name="Xu T."/>
            <person name="Nusinowitz S."/>
            <person name="Travis G.H."/>
        </authorList>
    </citation>
    <scope>FUNCTION</scope>
    <scope>CATALYTIC ACTIVITY</scope>
    <scope>TISSUE SPECIFICITY</scope>
    <scope>BIOPHYSICOCHEMICAL PROPERTIES</scope>
    <scope>INTERACTION WITH RLBP1</scope>
</reference>
<organism>
    <name type="scientific">Gallus gallus</name>
    <name type="common">Chicken</name>
    <dbReference type="NCBI Taxonomy" id="9031"/>
    <lineage>
        <taxon>Eukaryota</taxon>
        <taxon>Metazoa</taxon>
        <taxon>Chordata</taxon>
        <taxon>Craniata</taxon>
        <taxon>Vertebrata</taxon>
        <taxon>Euteleostomi</taxon>
        <taxon>Archelosauria</taxon>
        <taxon>Archosauria</taxon>
        <taxon>Dinosauria</taxon>
        <taxon>Saurischia</taxon>
        <taxon>Theropoda</taxon>
        <taxon>Coelurosauria</taxon>
        <taxon>Aves</taxon>
        <taxon>Neognathae</taxon>
        <taxon>Galloanserae</taxon>
        <taxon>Galliformes</taxon>
        <taxon>Phasianidae</taxon>
        <taxon>Phasianinae</taxon>
        <taxon>Gallus</taxon>
    </lineage>
</organism>
<gene>
    <name type="primary">DEGS1</name>
    <name evidence="4" type="synonym">DES1</name>
    <name type="ORF">RCJMB04_22e12</name>
</gene>